<reference key="1">
    <citation type="journal article" date="2008" name="J. Bacteriol.">
        <title>The pangenome structure of Escherichia coli: comparative genomic analysis of E. coli commensal and pathogenic isolates.</title>
        <authorList>
            <person name="Rasko D.A."/>
            <person name="Rosovitz M.J."/>
            <person name="Myers G.S.A."/>
            <person name="Mongodin E.F."/>
            <person name="Fricke W.F."/>
            <person name="Gajer P."/>
            <person name="Crabtree J."/>
            <person name="Sebaihia M."/>
            <person name="Thomson N.R."/>
            <person name="Chaudhuri R."/>
            <person name="Henderson I.R."/>
            <person name="Sperandio V."/>
            <person name="Ravel J."/>
        </authorList>
    </citation>
    <scope>NUCLEOTIDE SEQUENCE [LARGE SCALE GENOMIC DNA]</scope>
    <source>
        <strain>E24377A / ETEC</strain>
    </source>
</reference>
<proteinExistence type="inferred from homology"/>
<feature type="chain" id="PRO_1000062231" description="Succinylglutamate desuccinylase">
    <location>
        <begin position="1"/>
        <end position="322"/>
    </location>
</feature>
<feature type="active site" evidence="1">
    <location>
        <position position="210"/>
    </location>
</feature>
<feature type="binding site" evidence="1">
    <location>
        <position position="53"/>
    </location>
    <ligand>
        <name>Zn(2+)</name>
        <dbReference type="ChEBI" id="CHEBI:29105"/>
    </ligand>
</feature>
<feature type="binding site" evidence="1">
    <location>
        <position position="56"/>
    </location>
    <ligand>
        <name>Zn(2+)</name>
        <dbReference type="ChEBI" id="CHEBI:29105"/>
    </ligand>
</feature>
<feature type="binding site" evidence="1">
    <location>
        <position position="147"/>
    </location>
    <ligand>
        <name>Zn(2+)</name>
        <dbReference type="ChEBI" id="CHEBI:29105"/>
    </ligand>
</feature>
<accession>A7ZML2</accession>
<sequence>MDNFLALTLTGKKPVITEREINGVRWRWLGDGVLELTPLTPPQGALVISAGIHGNETAPVEMLDALLGAISHGEIPLRWRLLVILGNPPALKQGKRYCHSDMNRMFGGRWQLFAESGETCRARELEQCLEDFYDLGKESVRWHLDLHTAIRGSLHPQFGVLPQRDIPWDEKFLTWLGAAGLEALVFHQEPGGTFTHFSARHFGALACTLELGKALPFGQNDLRQFAVTASAIAALLSGESVGIVRTPPLRYRVVSQITRHSPSFEMHMASDTLNFMPFEKGTLLAQDGEERFTVTHDVEYVLFPNPLVALGLRAGLMLEKIS</sequence>
<gene>
    <name evidence="1" type="primary">astE</name>
    <name type="ordered locus">EcE24377A_1966</name>
</gene>
<name>ASTE_ECO24</name>
<keyword id="KW-0056">Arginine metabolism</keyword>
<keyword id="KW-0378">Hydrolase</keyword>
<keyword id="KW-0479">Metal-binding</keyword>
<keyword id="KW-1185">Reference proteome</keyword>
<keyword id="KW-0862">Zinc</keyword>
<protein>
    <recommendedName>
        <fullName evidence="1">Succinylglutamate desuccinylase</fullName>
        <ecNumber evidence="1">3.5.1.96</ecNumber>
    </recommendedName>
</protein>
<organism>
    <name type="scientific">Escherichia coli O139:H28 (strain E24377A / ETEC)</name>
    <dbReference type="NCBI Taxonomy" id="331111"/>
    <lineage>
        <taxon>Bacteria</taxon>
        <taxon>Pseudomonadati</taxon>
        <taxon>Pseudomonadota</taxon>
        <taxon>Gammaproteobacteria</taxon>
        <taxon>Enterobacterales</taxon>
        <taxon>Enterobacteriaceae</taxon>
        <taxon>Escherichia</taxon>
    </lineage>
</organism>
<evidence type="ECO:0000255" key="1">
    <source>
        <dbReference type="HAMAP-Rule" id="MF_00767"/>
    </source>
</evidence>
<dbReference type="EC" id="3.5.1.96" evidence="1"/>
<dbReference type="EMBL" id="CP000800">
    <property type="protein sequence ID" value="ABV17022.1"/>
    <property type="molecule type" value="Genomic_DNA"/>
</dbReference>
<dbReference type="RefSeq" id="WP_000368492.1">
    <property type="nucleotide sequence ID" value="NC_009801.1"/>
</dbReference>
<dbReference type="SMR" id="A7ZML2"/>
<dbReference type="GeneID" id="75203050"/>
<dbReference type="KEGG" id="ecw:EcE24377A_1966"/>
<dbReference type="HOGENOM" id="CLU_071608_0_0_6"/>
<dbReference type="UniPathway" id="UPA00185">
    <property type="reaction ID" value="UER00283"/>
</dbReference>
<dbReference type="Proteomes" id="UP000001122">
    <property type="component" value="Chromosome"/>
</dbReference>
<dbReference type="GO" id="GO:0016788">
    <property type="term" value="F:hydrolase activity, acting on ester bonds"/>
    <property type="evidence" value="ECO:0007669"/>
    <property type="project" value="UniProtKB-UniRule"/>
</dbReference>
<dbReference type="GO" id="GO:0009017">
    <property type="term" value="F:succinylglutamate desuccinylase activity"/>
    <property type="evidence" value="ECO:0007669"/>
    <property type="project" value="UniProtKB-EC"/>
</dbReference>
<dbReference type="GO" id="GO:0008270">
    <property type="term" value="F:zinc ion binding"/>
    <property type="evidence" value="ECO:0007669"/>
    <property type="project" value="UniProtKB-UniRule"/>
</dbReference>
<dbReference type="GO" id="GO:0019544">
    <property type="term" value="P:arginine catabolic process to glutamate"/>
    <property type="evidence" value="ECO:0007669"/>
    <property type="project" value="UniProtKB-UniRule"/>
</dbReference>
<dbReference type="GO" id="GO:0019545">
    <property type="term" value="P:arginine catabolic process to succinate"/>
    <property type="evidence" value="ECO:0007669"/>
    <property type="project" value="UniProtKB-UniRule"/>
</dbReference>
<dbReference type="CDD" id="cd03855">
    <property type="entry name" value="M14_ASTE"/>
    <property type="match status" value="1"/>
</dbReference>
<dbReference type="FunFam" id="3.40.630.10:FF:000017">
    <property type="entry name" value="Succinylglutamate desuccinylase"/>
    <property type="match status" value="1"/>
</dbReference>
<dbReference type="Gene3D" id="3.40.630.10">
    <property type="entry name" value="Zn peptidases"/>
    <property type="match status" value="1"/>
</dbReference>
<dbReference type="HAMAP" id="MF_00767">
    <property type="entry name" value="Arg_catab_AstE"/>
    <property type="match status" value="1"/>
</dbReference>
<dbReference type="InterPro" id="IPR050178">
    <property type="entry name" value="AspA/AstE_fam"/>
</dbReference>
<dbReference type="InterPro" id="IPR055438">
    <property type="entry name" value="AstE_AspA_cat"/>
</dbReference>
<dbReference type="InterPro" id="IPR007036">
    <property type="entry name" value="Aste_AspA_hybrid_dom"/>
</dbReference>
<dbReference type="InterPro" id="IPR016681">
    <property type="entry name" value="SuccinylGlu_desuccinylase"/>
</dbReference>
<dbReference type="NCBIfam" id="TIGR03242">
    <property type="entry name" value="arg_catab_astE"/>
    <property type="match status" value="1"/>
</dbReference>
<dbReference type="NCBIfam" id="NF003706">
    <property type="entry name" value="PRK05324.1"/>
    <property type="match status" value="1"/>
</dbReference>
<dbReference type="PANTHER" id="PTHR15162">
    <property type="entry name" value="ASPARTOACYLASE"/>
    <property type="match status" value="1"/>
</dbReference>
<dbReference type="PANTHER" id="PTHR15162:SF7">
    <property type="entry name" value="SUCCINYLGLUTAMATE DESUCCINYLASE"/>
    <property type="match status" value="1"/>
</dbReference>
<dbReference type="Pfam" id="PF24827">
    <property type="entry name" value="AstE_AspA_cat"/>
    <property type="match status" value="1"/>
</dbReference>
<dbReference type="Pfam" id="PF04952">
    <property type="entry name" value="AstE_AspA_hybrid"/>
    <property type="match status" value="1"/>
</dbReference>
<dbReference type="PIRSF" id="PIRSF017020">
    <property type="entry name" value="AstE"/>
    <property type="match status" value="1"/>
</dbReference>
<dbReference type="SUPFAM" id="SSF53187">
    <property type="entry name" value="Zn-dependent exopeptidases"/>
    <property type="match status" value="1"/>
</dbReference>
<comment type="function">
    <text evidence="1">Transforms N(2)-succinylglutamate into succinate and glutamate.</text>
</comment>
<comment type="catalytic activity">
    <reaction evidence="1">
        <text>N-succinyl-L-glutamate + H2O = L-glutamate + succinate</text>
        <dbReference type="Rhea" id="RHEA:15169"/>
        <dbReference type="ChEBI" id="CHEBI:15377"/>
        <dbReference type="ChEBI" id="CHEBI:29985"/>
        <dbReference type="ChEBI" id="CHEBI:30031"/>
        <dbReference type="ChEBI" id="CHEBI:58763"/>
        <dbReference type="EC" id="3.5.1.96"/>
    </reaction>
</comment>
<comment type="cofactor">
    <cofactor evidence="1">
        <name>Zn(2+)</name>
        <dbReference type="ChEBI" id="CHEBI:29105"/>
    </cofactor>
    <text evidence="1">Binds 1 zinc ion per subunit.</text>
</comment>
<comment type="pathway">
    <text evidence="1">Amino-acid degradation; L-arginine degradation via AST pathway; L-glutamate and succinate from L-arginine: step 5/5.</text>
</comment>
<comment type="similarity">
    <text evidence="1">Belongs to the AspA/AstE family. Succinylglutamate desuccinylase subfamily.</text>
</comment>